<gene>
    <name type="primary">DOT1</name>
    <name type="synonym">KMT4</name>
    <name type="synonym">PCH1</name>
    <name type="ordered locus">YDR440W</name>
    <name type="ORF">D9461.26</name>
</gene>
<feature type="chain" id="PRO_0000186091" description="Histone-lysine N-methyltransferase, H3 lysine-79 specific">
    <location>
        <begin position="1"/>
        <end position="582"/>
    </location>
</feature>
<feature type="domain" description="DOT1" evidence="1">
    <location>
        <begin position="254"/>
        <end position="568"/>
    </location>
</feature>
<feature type="region of interest" description="Disordered" evidence="2">
    <location>
        <begin position="1"/>
        <end position="50"/>
    </location>
</feature>
<feature type="region of interest" description="Disordered" evidence="2">
    <location>
        <begin position="99"/>
        <end position="177"/>
    </location>
</feature>
<feature type="region of interest" description="Required for interaction with nucleosomes and DNA">
    <location>
        <begin position="158"/>
        <end position="172"/>
    </location>
</feature>
<feature type="compositionally biased region" description="Polar residues" evidence="2">
    <location>
        <begin position="1"/>
        <end position="30"/>
    </location>
</feature>
<feature type="compositionally biased region" description="Polar residues" evidence="2">
    <location>
        <begin position="39"/>
        <end position="50"/>
    </location>
</feature>
<feature type="compositionally biased region" description="Basic residues" evidence="2">
    <location>
        <begin position="104"/>
        <end position="117"/>
    </location>
</feature>
<feature type="compositionally biased region" description="Basic residues" evidence="2">
    <location>
        <begin position="124"/>
        <end position="146"/>
    </location>
</feature>
<feature type="binding site">
    <location>
        <begin position="372"/>
        <end position="375"/>
    </location>
    <ligand>
        <name>S-adenosyl-L-methionine</name>
        <dbReference type="ChEBI" id="CHEBI:59789"/>
    </ligand>
</feature>
<feature type="binding site">
    <location>
        <begin position="395"/>
        <end position="404"/>
    </location>
    <ligand>
        <name>S-adenosyl-L-methionine</name>
        <dbReference type="ChEBI" id="CHEBI:59789"/>
    </ligand>
</feature>
<feature type="binding site">
    <location>
        <position position="422"/>
    </location>
    <ligand>
        <name>S-adenosyl-L-methionine</name>
        <dbReference type="ChEBI" id="CHEBI:59789"/>
    </ligand>
</feature>
<feature type="binding site">
    <location>
        <begin position="459"/>
        <end position="460"/>
    </location>
    <ligand>
        <name>S-adenosyl-L-methionine</name>
        <dbReference type="ChEBI" id="CHEBI:59789"/>
    </ligand>
</feature>
<feature type="modified residue" description="Phosphoserine; by HOG1" evidence="14">
    <location>
        <position position="565"/>
    </location>
</feature>
<feature type="modified residue" description="Phosphothreonine; by HOG1" evidence="14">
    <location>
        <position position="576"/>
    </location>
</feature>
<feature type="mutagenesis site" description="Abolishes methyltransferase activity." evidence="11">
    <original>D</original>
    <variation>A</variation>
    <variation>N</variation>
    <location>
        <position position="301"/>
    </location>
</feature>
<feature type="mutagenesis site" description="Reduces methyltransferase activity." evidence="11">
    <original>Y</original>
    <variation>F</variation>
    <location>
        <position position="350"/>
    </location>
</feature>
<feature type="mutagenesis site" description="Reduces methyltransferase activity." evidence="11">
    <original>Y</original>
    <variation>F</variation>
    <location>
        <position position="372"/>
    </location>
</feature>
<feature type="mutagenesis site" description="Abolishes methyltransferase activity." evidence="11">
    <original>E</original>
    <variation>A</variation>
    <variation>Q</variation>
    <location>
        <position position="374"/>
    </location>
</feature>
<feature type="mutagenesis site" description="Abolishes methyltransferase activity." evidence="4">
    <original>G</original>
    <variation>R</variation>
    <location>
        <position position="399"/>
    </location>
</feature>
<feature type="mutagenesis site" description="Abolishes methyltransferase activity." evidence="4">
    <location>
        <begin position="401"/>
        <end position="403"/>
    </location>
</feature>
<feature type="mutagenesis site" description="Abolishes silencing function." evidence="5">
    <original>G</original>
    <variation>A</variation>
    <variation>R</variation>
    <location>
        <position position="401"/>
    </location>
</feature>
<feature type="mutagenesis site" description="Abolishes S-adenosyl-L-methionine binding and methyltransferase activity." evidence="11">
    <original>E</original>
    <variation>A</variation>
    <location>
        <position position="422"/>
    </location>
</feature>
<feature type="mutagenesis site" description="No effect." evidence="11">
    <original>E</original>
    <variation>D</variation>
    <location>
        <position position="422"/>
    </location>
</feature>
<feature type="mutagenesis site" description="Abolishes methyltransferase activity, but not S-adenosyl-L-methionine binding." evidence="11">
    <original>W</original>
    <variation>A</variation>
    <location>
        <position position="543"/>
    </location>
</feature>
<feature type="mutagenesis site" description="Abolishes methyltransferase activity, but not S-adenosyl-L-methionine binding." evidence="11">
    <original>Y</original>
    <variation>A</variation>
    <location>
        <position position="550"/>
    </location>
</feature>
<feature type="mutagenesis site" description="No effect." evidence="11">
    <original>Y</original>
    <variation>F</variation>
    <location>
        <position position="550"/>
    </location>
</feature>
<feature type="strand" evidence="16">
    <location>
        <begin position="178"/>
        <end position="180"/>
    </location>
</feature>
<feature type="strand" evidence="16">
    <location>
        <begin position="186"/>
        <end position="188"/>
    </location>
</feature>
<feature type="helix" evidence="16">
    <location>
        <begin position="196"/>
        <end position="201"/>
    </location>
</feature>
<feature type="helix" evidence="16">
    <location>
        <begin position="212"/>
        <end position="214"/>
    </location>
</feature>
<feature type="strand" evidence="16">
    <location>
        <begin position="236"/>
        <end position="240"/>
    </location>
</feature>
<feature type="strand" evidence="16">
    <location>
        <begin position="248"/>
        <end position="252"/>
    </location>
</feature>
<feature type="strand" evidence="16">
    <location>
        <begin position="255"/>
        <end position="257"/>
    </location>
</feature>
<feature type="strand" evidence="16">
    <location>
        <begin position="260"/>
        <end position="262"/>
    </location>
</feature>
<feature type="helix" evidence="16">
    <location>
        <begin position="264"/>
        <end position="277"/>
    </location>
</feature>
<feature type="helix" evidence="16">
    <location>
        <begin position="284"/>
        <end position="291"/>
    </location>
</feature>
<feature type="helix" evidence="16">
    <location>
        <begin position="293"/>
        <end position="301"/>
    </location>
</feature>
<feature type="helix" evidence="16">
    <location>
        <begin position="305"/>
        <end position="319"/>
    </location>
</feature>
<feature type="helix" evidence="16">
    <location>
        <begin position="324"/>
        <end position="331"/>
    </location>
</feature>
<feature type="strand" evidence="16">
    <location>
        <begin position="336"/>
        <end position="338"/>
    </location>
</feature>
<feature type="helix" evidence="16">
    <location>
        <begin position="340"/>
        <end position="353"/>
    </location>
</feature>
<feature type="helix" evidence="16">
    <location>
        <begin position="355"/>
        <end position="361"/>
    </location>
</feature>
<feature type="helix" evidence="16">
    <location>
        <begin position="368"/>
        <end position="370"/>
    </location>
</feature>
<feature type="helix" evidence="16">
    <location>
        <begin position="377"/>
        <end position="386"/>
    </location>
</feature>
<feature type="strand" evidence="16">
    <location>
        <begin position="394"/>
        <end position="399"/>
    </location>
</feature>
<feature type="turn" evidence="18">
    <location>
        <begin position="401"/>
        <end position="403"/>
    </location>
</feature>
<feature type="helix" evidence="16">
    <location>
        <begin position="404"/>
        <end position="413"/>
    </location>
</feature>
<feature type="strand" evidence="16">
    <location>
        <begin position="416"/>
        <end position="422"/>
    </location>
</feature>
<feature type="helix" evidence="16">
    <location>
        <begin position="425"/>
        <end position="444"/>
    </location>
</feature>
<feature type="strand" evidence="16">
    <location>
        <begin position="452"/>
        <end position="458"/>
    </location>
</feature>
<feature type="helix" evidence="16">
    <location>
        <begin position="464"/>
        <end position="469"/>
    </location>
</feature>
<feature type="helix" evidence="16">
    <location>
        <begin position="470"/>
        <end position="472"/>
    </location>
</feature>
<feature type="strand" evidence="16">
    <location>
        <begin position="474"/>
        <end position="478"/>
    </location>
</feature>
<feature type="helix" evidence="16">
    <location>
        <begin position="485"/>
        <end position="495"/>
    </location>
</feature>
<feature type="strand" evidence="16">
    <location>
        <begin position="503"/>
        <end position="508"/>
    </location>
</feature>
<feature type="strand" evidence="16">
    <location>
        <begin position="519"/>
        <end position="521"/>
    </location>
</feature>
<feature type="helix" evidence="16">
    <location>
        <begin position="525"/>
        <end position="528"/>
    </location>
</feature>
<feature type="strand" evidence="16">
    <location>
        <begin position="529"/>
        <end position="535"/>
    </location>
</feature>
<feature type="strand" evidence="17">
    <location>
        <begin position="541"/>
        <end position="543"/>
    </location>
</feature>
<feature type="strand" evidence="16">
    <location>
        <begin position="544"/>
        <end position="546"/>
    </location>
</feature>
<feature type="strand" evidence="16">
    <location>
        <begin position="549"/>
        <end position="555"/>
    </location>
</feature>
<feature type="helix" evidence="16">
    <location>
        <begin position="561"/>
        <end position="563"/>
    </location>
</feature>
<feature type="helix" evidence="18">
    <location>
        <begin position="566"/>
        <end position="569"/>
    </location>
</feature>
<organism>
    <name type="scientific">Saccharomyces cerevisiae (strain ATCC 204508 / S288c)</name>
    <name type="common">Baker's yeast</name>
    <dbReference type="NCBI Taxonomy" id="559292"/>
    <lineage>
        <taxon>Eukaryota</taxon>
        <taxon>Fungi</taxon>
        <taxon>Dikarya</taxon>
        <taxon>Ascomycota</taxon>
        <taxon>Saccharomycotina</taxon>
        <taxon>Saccharomycetes</taxon>
        <taxon>Saccharomycetales</taxon>
        <taxon>Saccharomycetaceae</taxon>
        <taxon>Saccharomyces</taxon>
    </lineage>
</organism>
<evidence type="ECO:0000255" key="1">
    <source>
        <dbReference type="PROSITE-ProRule" id="PRU00902"/>
    </source>
</evidence>
<evidence type="ECO:0000256" key="2">
    <source>
        <dbReference type="SAM" id="MobiDB-lite"/>
    </source>
</evidence>
<evidence type="ECO:0000269" key="3">
    <source>
    </source>
</evidence>
<evidence type="ECO:0000269" key="4">
    <source>
    </source>
</evidence>
<evidence type="ECO:0000269" key="5">
    <source>
    </source>
</evidence>
<evidence type="ECO:0000269" key="6">
    <source>
    </source>
</evidence>
<evidence type="ECO:0000269" key="7">
    <source>
    </source>
</evidence>
<evidence type="ECO:0000269" key="8">
    <source>
    </source>
</evidence>
<evidence type="ECO:0000269" key="9">
    <source>
    </source>
</evidence>
<evidence type="ECO:0000269" key="10">
    <source>
    </source>
</evidence>
<evidence type="ECO:0000269" key="11">
    <source>
    </source>
</evidence>
<evidence type="ECO:0000269" key="12">
    <source>
    </source>
</evidence>
<evidence type="ECO:0000269" key="13">
    <source>
    </source>
</evidence>
<evidence type="ECO:0000269" key="14">
    <source>
    </source>
</evidence>
<evidence type="ECO:0000269" key="15">
    <source>
    </source>
</evidence>
<evidence type="ECO:0007829" key="16">
    <source>
        <dbReference type="PDB" id="1U2Z"/>
    </source>
</evidence>
<evidence type="ECO:0007829" key="17">
    <source>
        <dbReference type="PDB" id="7K6P"/>
    </source>
</evidence>
<evidence type="ECO:0007829" key="18">
    <source>
        <dbReference type="PDB" id="7K6Q"/>
    </source>
</evidence>
<accession>Q04089</accession>
<accession>D6VT67</accession>
<name>DOT1_YEAST</name>
<protein>
    <recommendedName>
        <fullName>Histone-lysine N-methyltransferase, H3 lysine-79 specific</fullName>
        <ecNumber evidence="4 5 11">2.1.1.360</ecNumber>
    </recommendedName>
    <alternativeName>
        <fullName>Disrupter of telomere silencing protein 1</fullName>
    </alternativeName>
    <alternativeName>
        <fullName>Histone H3-K79 methyltransferase</fullName>
        <shortName>H3-K79-HMTase</shortName>
    </alternativeName>
    <alternativeName>
        <fullName>Lysine N-methyltransferase 4</fullName>
    </alternativeName>
</protein>
<dbReference type="EC" id="2.1.1.360" evidence="4 5 11"/>
<dbReference type="EMBL" id="U33007">
    <property type="protein sequence ID" value="AAB64868.1"/>
    <property type="molecule type" value="Genomic_DNA"/>
</dbReference>
<dbReference type="EMBL" id="BK006938">
    <property type="protein sequence ID" value="DAA12277.1"/>
    <property type="molecule type" value="Genomic_DNA"/>
</dbReference>
<dbReference type="PIR" id="S69720">
    <property type="entry name" value="S69720"/>
</dbReference>
<dbReference type="RefSeq" id="NP_010728.1">
    <property type="nucleotide sequence ID" value="NM_001180748.1"/>
</dbReference>
<dbReference type="PDB" id="1U2Z">
    <property type="method" value="X-ray"/>
    <property type="resolution" value="2.20 A"/>
    <property type="chains" value="A/B/C=158-582"/>
</dbReference>
<dbReference type="PDB" id="7K6P">
    <property type="method" value="EM"/>
    <property type="resolution" value="3.20 A"/>
    <property type="chains" value="K=176-580"/>
</dbReference>
<dbReference type="PDB" id="7K6Q">
    <property type="method" value="EM"/>
    <property type="resolution" value="3.10 A"/>
    <property type="chains" value="K=176-580"/>
</dbReference>
<dbReference type="PDBsum" id="1U2Z"/>
<dbReference type="PDBsum" id="7K6P"/>
<dbReference type="PDBsum" id="7K6Q"/>
<dbReference type="EMDB" id="EMD-22691"/>
<dbReference type="EMDB" id="EMD-22692"/>
<dbReference type="SMR" id="Q04089"/>
<dbReference type="BioGRID" id="32496">
    <property type="interactions" value="313"/>
</dbReference>
<dbReference type="DIP" id="DIP-2560N"/>
<dbReference type="FunCoup" id="Q04089">
    <property type="interactions" value="50"/>
</dbReference>
<dbReference type="IntAct" id="Q04089">
    <property type="interactions" value="4"/>
</dbReference>
<dbReference type="MINT" id="Q04089"/>
<dbReference type="STRING" id="4932.YDR440W"/>
<dbReference type="iPTMnet" id="Q04089"/>
<dbReference type="PaxDb" id="4932-YDR440W"/>
<dbReference type="PeptideAtlas" id="Q04089"/>
<dbReference type="EnsemblFungi" id="YDR440W_mRNA">
    <property type="protein sequence ID" value="YDR440W"/>
    <property type="gene ID" value="YDR440W"/>
</dbReference>
<dbReference type="GeneID" id="852050"/>
<dbReference type="KEGG" id="sce:YDR440W"/>
<dbReference type="AGR" id="SGD:S000002848"/>
<dbReference type="SGD" id="S000002848">
    <property type="gene designation" value="DOT1"/>
</dbReference>
<dbReference type="VEuPathDB" id="FungiDB:YDR440W"/>
<dbReference type="eggNOG" id="KOG3924">
    <property type="taxonomic scope" value="Eukaryota"/>
</dbReference>
<dbReference type="GeneTree" id="ENSGT00390000013515"/>
<dbReference type="HOGENOM" id="CLU_027287_0_1_1"/>
<dbReference type="InParanoid" id="Q04089"/>
<dbReference type="OMA" id="VQQKNYW"/>
<dbReference type="OrthoDB" id="443402at2759"/>
<dbReference type="BioCyc" id="YEAST:G3O-29974-MONOMER"/>
<dbReference type="BRENDA" id="2.1.1.360">
    <property type="organism ID" value="984"/>
</dbReference>
<dbReference type="Reactome" id="R-SCE-3214841">
    <property type="pathway name" value="PKMTs methylate histone lysines"/>
</dbReference>
<dbReference type="BioGRID-ORCS" id="852050">
    <property type="hits" value="0 hits in 10 CRISPR screens"/>
</dbReference>
<dbReference type="EvolutionaryTrace" id="Q04089"/>
<dbReference type="PRO" id="PR:Q04089"/>
<dbReference type="Proteomes" id="UP000002311">
    <property type="component" value="Chromosome IV"/>
</dbReference>
<dbReference type="RNAct" id="Q04089">
    <property type="molecule type" value="protein"/>
</dbReference>
<dbReference type="GO" id="GO:0000781">
    <property type="term" value="C:chromosome, telomeric region"/>
    <property type="evidence" value="ECO:0007669"/>
    <property type="project" value="GOC"/>
</dbReference>
<dbReference type="GO" id="GO:0000786">
    <property type="term" value="C:nucleosome"/>
    <property type="evidence" value="ECO:0007669"/>
    <property type="project" value="InterPro"/>
</dbReference>
<dbReference type="GO" id="GO:0005634">
    <property type="term" value="C:nucleus"/>
    <property type="evidence" value="ECO:0000314"/>
    <property type="project" value="SGD"/>
</dbReference>
<dbReference type="GO" id="GO:0003677">
    <property type="term" value="F:DNA binding"/>
    <property type="evidence" value="ECO:0007669"/>
    <property type="project" value="UniProtKB-KW"/>
</dbReference>
<dbReference type="GO" id="GO:0042393">
    <property type="term" value="F:histone binding"/>
    <property type="evidence" value="ECO:0007669"/>
    <property type="project" value="InterPro"/>
</dbReference>
<dbReference type="GO" id="GO:0031151">
    <property type="term" value="F:histone H3K79 methyltransferase activity"/>
    <property type="evidence" value="ECO:0000314"/>
    <property type="project" value="SGD"/>
</dbReference>
<dbReference type="GO" id="GO:0140956">
    <property type="term" value="F:histone H3K79 trimethyltransferase activity"/>
    <property type="evidence" value="ECO:0007669"/>
    <property type="project" value="UniProtKB-EC"/>
</dbReference>
<dbReference type="GO" id="GO:0000077">
    <property type="term" value="P:DNA damage checkpoint signaling"/>
    <property type="evidence" value="ECO:0000315"/>
    <property type="project" value="SGD"/>
</dbReference>
<dbReference type="GO" id="GO:0006281">
    <property type="term" value="P:DNA repair"/>
    <property type="evidence" value="ECO:0000318"/>
    <property type="project" value="GO_Central"/>
</dbReference>
<dbReference type="GO" id="GO:0070911">
    <property type="term" value="P:global genome nucleotide-excision repair"/>
    <property type="evidence" value="ECO:0000315"/>
    <property type="project" value="SGD"/>
</dbReference>
<dbReference type="GO" id="GO:0051598">
    <property type="term" value="P:meiotic recombination checkpoint signaling"/>
    <property type="evidence" value="ECO:0000316"/>
    <property type="project" value="SGD"/>
</dbReference>
<dbReference type="GO" id="GO:0032259">
    <property type="term" value="P:methylation"/>
    <property type="evidence" value="ECO:0007669"/>
    <property type="project" value="UniProtKB-KW"/>
</dbReference>
<dbReference type="GO" id="GO:0031571">
    <property type="term" value="P:mitotic G1 DNA damage checkpoint signaling"/>
    <property type="evidence" value="ECO:0000315"/>
    <property type="project" value="SGD"/>
</dbReference>
<dbReference type="GO" id="GO:0031573">
    <property type="term" value="P:mitotic intra-S DNA damage checkpoint signaling"/>
    <property type="evidence" value="ECO:0000315"/>
    <property type="project" value="SGD"/>
</dbReference>
<dbReference type="GO" id="GO:0031452">
    <property type="term" value="P:negative regulation of heterochromatin formation"/>
    <property type="evidence" value="ECO:0000315"/>
    <property type="project" value="SGD"/>
</dbReference>
<dbReference type="GO" id="GO:0006334">
    <property type="term" value="P:nucleosome assembly"/>
    <property type="evidence" value="ECO:0000314"/>
    <property type="project" value="SGD"/>
</dbReference>
<dbReference type="GO" id="GO:0006289">
    <property type="term" value="P:nucleotide-excision repair"/>
    <property type="evidence" value="ECO:0000315"/>
    <property type="project" value="SGD"/>
</dbReference>
<dbReference type="GO" id="GO:0006301">
    <property type="term" value="P:postreplication repair"/>
    <property type="evidence" value="ECO:0000316"/>
    <property type="project" value="SGD"/>
</dbReference>
<dbReference type="GO" id="GO:0000725">
    <property type="term" value="P:recombinational repair"/>
    <property type="evidence" value="ECO:0000315"/>
    <property type="project" value="SGD"/>
</dbReference>
<dbReference type="GO" id="GO:0031509">
    <property type="term" value="P:subtelomeric heterochromatin formation"/>
    <property type="evidence" value="ECO:0000315"/>
    <property type="project" value="SGD"/>
</dbReference>
<dbReference type="FunFam" id="3.40.50.150:FF:000033">
    <property type="entry name" value="Histone-lysine N-methyltransferase, H3 lysine-79 specific"/>
    <property type="match status" value="1"/>
</dbReference>
<dbReference type="Gene3D" id="1.10.260.170">
    <property type="match status" value="1"/>
</dbReference>
<dbReference type="Gene3D" id="3.40.50.150">
    <property type="entry name" value="Vaccinia Virus protein VP39"/>
    <property type="match status" value="1"/>
</dbReference>
<dbReference type="InterPro" id="IPR021162">
    <property type="entry name" value="Dot1"/>
</dbReference>
<dbReference type="InterPro" id="IPR025789">
    <property type="entry name" value="DOT1_dom"/>
</dbReference>
<dbReference type="InterPro" id="IPR030445">
    <property type="entry name" value="H3-K79_meTrfase"/>
</dbReference>
<dbReference type="InterPro" id="IPR029063">
    <property type="entry name" value="SAM-dependent_MTases_sf"/>
</dbReference>
<dbReference type="PANTHER" id="PTHR21451">
    <property type="entry name" value="HISTONE H3 METHYLTRANSFERASE"/>
    <property type="match status" value="1"/>
</dbReference>
<dbReference type="PANTHER" id="PTHR21451:SF0">
    <property type="entry name" value="HISTONE-LYSINE N-METHYLTRANSFERASE, H3 LYSINE-79 SPECIFIC"/>
    <property type="match status" value="1"/>
</dbReference>
<dbReference type="Pfam" id="PF08123">
    <property type="entry name" value="DOT1"/>
    <property type="match status" value="1"/>
</dbReference>
<dbReference type="PIRSF" id="PIRSF017570">
    <property type="entry name" value="Histone_H3-K79_MeTrfase"/>
    <property type="match status" value="1"/>
</dbReference>
<dbReference type="SUPFAM" id="SSF53335">
    <property type="entry name" value="S-adenosyl-L-methionine-dependent methyltransferases"/>
    <property type="match status" value="1"/>
</dbReference>
<dbReference type="PROSITE" id="PS51569">
    <property type="entry name" value="DOT1"/>
    <property type="match status" value="1"/>
</dbReference>
<proteinExistence type="evidence at protein level"/>
<comment type="function">
    <text evidence="3 6 7 9 11 12 13 15">Histone methyltransferase that specifically trimethylates histone H3 to form H3K79me3. This methylation is required for telomere silencing and for the pachytene checkpoint during the meiotic cell cycle by allowing the recruitment of RAD9 to double strand breaks. Nucleosomes are preferred as substrate compared to free histones. Can bind to DNA (in vitro).</text>
</comment>
<comment type="catalytic activity">
    <reaction evidence="1 4 5 11">
        <text>L-lysyl(79)-[histone H3] + 3 S-adenosyl-L-methionine = N(6),N(6),N(6)-trimethyl-L-lysyl(79)-[histone H3] + 3 S-adenosyl-L-homocysteine + 3 H(+)</text>
        <dbReference type="Rhea" id="RHEA:60328"/>
        <dbReference type="Rhea" id="RHEA-COMP:15549"/>
        <dbReference type="Rhea" id="RHEA-COMP:15552"/>
        <dbReference type="ChEBI" id="CHEBI:15378"/>
        <dbReference type="ChEBI" id="CHEBI:29969"/>
        <dbReference type="ChEBI" id="CHEBI:57856"/>
        <dbReference type="ChEBI" id="CHEBI:59789"/>
        <dbReference type="ChEBI" id="CHEBI:61961"/>
        <dbReference type="EC" id="2.1.1.360"/>
    </reaction>
</comment>
<comment type="activity regulation">
    <text evidence="8 11">Ubiquitination of histone H2B by the RAD6/UBC2-BRE1 complex to form H2BK123ub1 is required for efficient DOT1 methyltransferase activity on histone H3. Interaction with DNA is required for optimal histone methyltransferase activity.</text>
</comment>
<comment type="biophysicochemical properties">
    <phDependence>
        <text evidence="11">Optimum pH is 8 to 9.</text>
    </phDependence>
</comment>
<comment type="subcellular location">
    <subcellularLocation>
        <location evidence="3">Nucleus</location>
    </subcellularLocation>
</comment>
<comment type="disruption phenotype">
    <text evidence="14">Leads to sensitivity to UV irradiation.</text>
</comment>
<comment type="miscellaneous">
    <text>In contrast to other lysine histone methyltransferases, it does not contain a SET domain, suggesting the existence of another mechanism for methylation of lysine residues of histones.</text>
</comment>
<comment type="miscellaneous">
    <text evidence="10">Present with 2160 molecules/cell in log phase SD medium.</text>
</comment>
<comment type="similarity">
    <text evidence="1">Belongs to the class I-like SAM-binding methyltransferase superfamily. DOT1 family.</text>
</comment>
<reference key="1">
    <citation type="journal article" date="1998" name="Genetics">
        <title>Identification of high-copy disruptors of telomeric silencing in Saccharomyces cerevisiae.</title>
        <authorList>
            <person name="Singer M.S."/>
            <person name="Kahana A."/>
            <person name="Wolf A.J."/>
            <person name="Meisinger L.L."/>
            <person name="Peterson S.E."/>
            <person name="Goggin C."/>
            <person name="Mahowald M."/>
            <person name="Gottschling D.E."/>
        </authorList>
    </citation>
    <scope>NUCLEOTIDE SEQUENCE [GENOMIC DNA]</scope>
    <scope>FUNCTION</scope>
</reference>
<reference key="2">
    <citation type="journal article" date="1997" name="Nature">
        <title>The nucleotide sequence of Saccharomyces cerevisiae chromosome IV.</title>
        <authorList>
            <person name="Jacq C."/>
            <person name="Alt-Moerbe J."/>
            <person name="Andre B."/>
            <person name="Arnold W."/>
            <person name="Bahr A."/>
            <person name="Ballesta J.P.G."/>
            <person name="Bargues M."/>
            <person name="Baron L."/>
            <person name="Becker A."/>
            <person name="Biteau N."/>
            <person name="Bloecker H."/>
            <person name="Blugeon C."/>
            <person name="Boskovic J."/>
            <person name="Brandt P."/>
            <person name="Brueckner M."/>
            <person name="Buitrago M.J."/>
            <person name="Coster F."/>
            <person name="Delaveau T."/>
            <person name="del Rey F."/>
            <person name="Dujon B."/>
            <person name="Eide L.G."/>
            <person name="Garcia-Cantalejo J.M."/>
            <person name="Goffeau A."/>
            <person name="Gomez-Peris A."/>
            <person name="Granotier C."/>
            <person name="Hanemann V."/>
            <person name="Hankeln T."/>
            <person name="Hoheisel J.D."/>
            <person name="Jaeger W."/>
            <person name="Jimenez A."/>
            <person name="Jonniaux J.-L."/>
            <person name="Kraemer C."/>
            <person name="Kuester H."/>
            <person name="Laamanen P."/>
            <person name="Legros Y."/>
            <person name="Louis E.J."/>
            <person name="Moeller-Rieker S."/>
            <person name="Monnet A."/>
            <person name="Moro M."/>
            <person name="Mueller-Auer S."/>
            <person name="Nussbaumer B."/>
            <person name="Paricio N."/>
            <person name="Paulin L."/>
            <person name="Perea J."/>
            <person name="Perez-Alonso M."/>
            <person name="Perez-Ortin J.E."/>
            <person name="Pohl T.M."/>
            <person name="Prydz H."/>
            <person name="Purnelle B."/>
            <person name="Rasmussen S.W."/>
            <person name="Remacha M.A."/>
            <person name="Revuelta J.L."/>
            <person name="Rieger M."/>
            <person name="Salom D."/>
            <person name="Saluz H.P."/>
            <person name="Saiz J.E."/>
            <person name="Saren A.-M."/>
            <person name="Schaefer M."/>
            <person name="Scharfe M."/>
            <person name="Schmidt E.R."/>
            <person name="Schneider C."/>
            <person name="Scholler P."/>
            <person name="Schwarz S."/>
            <person name="Soler-Mira A."/>
            <person name="Urrestarazu L.A."/>
            <person name="Verhasselt P."/>
            <person name="Vissers S."/>
            <person name="Voet M."/>
            <person name="Volckaert G."/>
            <person name="Wagner G."/>
            <person name="Wambutt R."/>
            <person name="Wedler E."/>
            <person name="Wedler H."/>
            <person name="Woelfl S."/>
            <person name="Harris D.E."/>
            <person name="Bowman S."/>
            <person name="Brown D."/>
            <person name="Churcher C.M."/>
            <person name="Connor R."/>
            <person name="Dedman K."/>
            <person name="Gentles S."/>
            <person name="Hamlin N."/>
            <person name="Hunt S."/>
            <person name="Jones L."/>
            <person name="McDonald S."/>
            <person name="Murphy L.D."/>
            <person name="Niblett D."/>
            <person name="Odell C."/>
            <person name="Oliver K."/>
            <person name="Rajandream M.A."/>
            <person name="Richards C."/>
            <person name="Shore L."/>
            <person name="Walsh S.V."/>
            <person name="Barrell B.G."/>
            <person name="Dietrich F.S."/>
            <person name="Mulligan J.T."/>
            <person name="Allen E."/>
            <person name="Araujo R."/>
            <person name="Aviles E."/>
            <person name="Berno A."/>
            <person name="Carpenter J."/>
            <person name="Chen E."/>
            <person name="Cherry J.M."/>
            <person name="Chung E."/>
            <person name="Duncan M."/>
            <person name="Hunicke-Smith S."/>
            <person name="Hyman R.W."/>
            <person name="Komp C."/>
            <person name="Lashkari D."/>
            <person name="Lew H."/>
            <person name="Lin D."/>
            <person name="Mosedale D."/>
            <person name="Nakahara K."/>
            <person name="Namath A."/>
            <person name="Oefner P."/>
            <person name="Oh C."/>
            <person name="Petel F.X."/>
            <person name="Roberts D."/>
            <person name="Schramm S."/>
            <person name="Schroeder M."/>
            <person name="Shogren T."/>
            <person name="Shroff N."/>
            <person name="Winant A."/>
            <person name="Yelton M.A."/>
            <person name="Botstein D."/>
            <person name="Davis R.W."/>
            <person name="Johnston M."/>
            <person name="Andrews S."/>
            <person name="Brinkman R."/>
            <person name="Cooper J."/>
            <person name="Ding H."/>
            <person name="Du Z."/>
            <person name="Favello A."/>
            <person name="Fulton L."/>
            <person name="Gattung S."/>
            <person name="Greco T."/>
            <person name="Hallsworth K."/>
            <person name="Hawkins J."/>
            <person name="Hillier L.W."/>
            <person name="Jier M."/>
            <person name="Johnson D."/>
            <person name="Johnston L."/>
            <person name="Kirsten J."/>
            <person name="Kucaba T."/>
            <person name="Langston Y."/>
            <person name="Latreille P."/>
            <person name="Le T."/>
            <person name="Mardis E."/>
            <person name="Menezes S."/>
            <person name="Miller N."/>
            <person name="Nhan M."/>
            <person name="Pauley A."/>
            <person name="Peluso D."/>
            <person name="Rifkin L."/>
            <person name="Riles L."/>
            <person name="Taich A."/>
            <person name="Trevaskis E."/>
            <person name="Vignati D."/>
            <person name="Wilcox L."/>
            <person name="Wohldman P."/>
            <person name="Vaudin M."/>
            <person name="Wilson R."/>
            <person name="Waterston R."/>
            <person name="Albermann K."/>
            <person name="Hani J."/>
            <person name="Heumann K."/>
            <person name="Kleine K."/>
            <person name="Mewes H.-W."/>
            <person name="Zollner A."/>
            <person name="Zaccaria P."/>
        </authorList>
    </citation>
    <scope>NUCLEOTIDE SEQUENCE [LARGE SCALE GENOMIC DNA]</scope>
    <source>
        <strain>ATCC 204508 / S288c</strain>
    </source>
</reference>
<reference key="3">
    <citation type="journal article" date="2014" name="G3 (Bethesda)">
        <title>The reference genome sequence of Saccharomyces cerevisiae: Then and now.</title>
        <authorList>
            <person name="Engel S.R."/>
            <person name="Dietrich F.S."/>
            <person name="Fisk D.G."/>
            <person name="Binkley G."/>
            <person name="Balakrishnan R."/>
            <person name="Costanzo M.C."/>
            <person name="Dwight S.S."/>
            <person name="Hitz B.C."/>
            <person name="Karra K."/>
            <person name="Nash R.S."/>
            <person name="Weng S."/>
            <person name="Wong E.D."/>
            <person name="Lloyd P."/>
            <person name="Skrzypek M.S."/>
            <person name="Miyasato S.R."/>
            <person name="Simison M."/>
            <person name="Cherry J.M."/>
        </authorList>
    </citation>
    <scope>GENOME REANNOTATION</scope>
    <source>
        <strain>ATCC 204508 / S288c</strain>
    </source>
</reference>
<reference key="4">
    <citation type="journal article" date="2000" name="Mol. Biol. Cell">
        <title>Role for the silencing protein Dot1 in meiotic checkpoint control.</title>
        <authorList>
            <person name="San-Segundo P.A."/>
            <person name="Roeder G.S."/>
        </authorList>
    </citation>
    <scope>FUNCTION</scope>
    <scope>SUBCELLULAR LOCATION</scope>
</reference>
<reference key="5">
    <citation type="journal article" date="2002" name="Cell">
        <title>Dot1p modulates silencing in yeast by methylation of the nucleosome core.</title>
        <authorList>
            <person name="van Leeuwen F."/>
            <person name="Gafken P.R."/>
            <person name="Gottschling D.E."/>
        </authorList>
    </citation>
    <scope>CATALYTIC ACTIVITY</scope>
    <scope>MUTAGENESIS OF GLY-401</scope>
</reference>
<reference key="6">
    <citation type="journal article" date="2002" name="Genes Dev.">
        <title>Lysine methylation within the globular domain of histone H3 by Dot1 is important for telomeric silencing and Sir protein association.</title>
        <authorList>
            <person name="Ng H.H."/>
            <person name="Feng Q."/>
            <person name="Wang H."/>
            <person name="Erdjument-Bromage H."/>
            <person name="Tempst P."/>
            <person name="Zhang Y."/>
            <person name="Struhl K."/>
        </authorList>
    </citation>
    <scope>CATALYTIC ACTIVITY</scope>
    <scope>MUTAGENESIS OF GLY-399 AND 401-GLY--GLY-403</scope>
</reference>
<reference key="7">
    <citation type="journal article" date="2002" name="J. Biol. Chem.">
        <title>Disruptor of telomeric silencing-1 is a chromatin-specific histone H3 methyltransferase.</title>
        <authorList>
            <person name="Lacoste N."/>
            <person name="Utley R.T."/>
            <person name="Hunter J.M."/>
            <person name="Poirier G.G."/>
            <person name="Cote J."/>
        </authorList>
    </citation>
    <scope>FUNCTION</scope>
</reference>
<reference key="8">
    <citation type="journal article" date="2002" name="J. Biol. Chem.">
        <title>Ubiquitination of histone H2B by Rad6 is required for efficient Dot1-mediated methylation of histone H3 lysine 79.</title>
        <authorList>
            <person name="Ng H.H."/>
            <person name="Xu R.-M."/>
            <person name="Zhang Y."/>
            <person name="Struhl K."/>
        </authorList>
    </citation>
    <scope>ACTIVITY REGULATION</scope>
</reference>
<reference key="9">
    <citation type="journal article" date="2002" name="Nature">
        <title>Gene silencing: trans-histone regulatory pathway in chromatin.</title>
        <authorList>
            <person name="Briggs S.D."/>
            <person name="Xiao T."/>
            <person name="Sun Z.-W."/>
            <person name="Caldwell J.A."/>
            <person name="Shabanowitz J."/>
            <person name="Hunt D.F."/>
            <person name="Allis C.D."/>
            <person name="Strahl B.D."/>
        </authorList>
    </citation>
    <scope>FUNCTION</scope>
</reference>
<reference key="10">
    <citation type="journal article" date="2003" name="Nature">
        <title>Global analysis of protein expression in yeast.</title>
        <authorList>
            <person name="Ghaemmaghami S."/>
            <person name="Huh W.-K."/>
            <person name="Bower K."/>
            <person name="Howson R.W."/>
            <person name="Belle A."/>
            <person name="Dephoure N."/>
            <person name="O'Shea E.K."/>
            <person name="Weissman J.S."/>
        </authorList>
    </citation>
    <scope>LEVEL OF PROTEIN EXPRESSION [LARGE SCALE ANALYSIS]</scope>
</reference>
<reference key="11">
    <citation type="journal article" date="2003" name="Proc. Natl. Acad. Sci. U.S.A.">
        <title>Lysine-79 of histone H3 is hypomethylated at silenced loci in yeast and mammalian cells: a potential mechanism for position-effect variegation.</title>
        <authorList>
            <person name="Ng H.H."/>
            <person name="Ciccone D.N."/>
            <person name="Morshead K.B."/>
            <person name="Oettinger M.A."/>
            <person name="Struhl K."/>
        </authorList>
    </citation>
    <scope>FUNCTION</scope>
</reference>
<reference key="12">
    <citation type="journal article" date="2005" name="J. Biol. Chem.">
        <title>The DNA damage checkpoint response requires histone H2B ubiquitination by Rad6-Bre1 and H3 methylation by Dot1.</title>
        <authorList>
            <person name="Giannattasio M."/>
            <person name="Lazzaro F."/>
            <person name="Plevani P."/>
            <person name="Muzi-Falconi M."/>
        </authorList>
    </citation>
    <scope>FUNCTION</scope>
</reference>
<reference key="13">
    <citation type="journal article" date="2005" name="Mol. Cell. Biol.">
        <title>Role of Dot1-dependent histone H3 methylation in G1 and S phase DNA damage checkpoint functions of Rad9.</title>
        <authorList>
            <person name="Wysocki R."/>
            <person name="Javaheri A."/>
            <person name="Allard S."/>
            <person name="Sha F."/>
            <person name="Cote J."/>
            <person name="Kron S.J."/>
        </authorList>
    </citation>
    <scope>FUNCTION</scope>
</reference>
<reference key="14">
    <citation type="journal article" date="2008" name="Mol. Cell. Proteomics">
        <title>A multidimensional chromatography technology for in-depth phosphoproteome analysis.</title>
        <authorList>
            <person name="Albuquerque C.P."/>
            <person name="Smolka M.B."/>
            <person name="Payne S.H."/>
            <person name="Bafna V."/>
            <person name="Eng J."/>
            <person name="Zhou H."/>
        </authorList>
    </citation>
    <scope>IDENTIFICATION BY MASS SPECTROMETRY [LARGE SCALE ANALYSIS]</scope>
</reference>
<reference key="15">
    <citation type="journal article" date="2009" name="Science">
        <title>Global analysis of Cdk1 substrate phosphorylation sites provides insights into evolution.</title>
        <authorList>
            <person name="Holt L.J."/>
            <person name="Tuch B.B."/>
            <person name="Villen J."/>
            <person name="Johnson A.D."/>
            <person name="Gygi S.P."/>
            <person name="Morgan D.O."/>
        </authorList>
    </citation>
    <scope>IDENTIFICATION BY MASS SPECTROMETRY [LARGE SCALE ANALYSIS]</scope>
</reference>
<reference key="16">
    <citation type="journal article" date="2024" name="FEBS J.">
        <title>Proline-directed yeast and human MAP kinases phosphorylate the Dot1p/DOT1L histone H3K79 methyltransferase.</title>
        <authorList>
            <person name="Separovich R.J."/>
            <person name="Karakatsanis N.M."/>
            <person name="Gao K."/>
            <person name="Fuh D."/>
            <person name="Hamey J.J."/>
            <person name="Wilkins M.R."/>
        </authorList>
    </citation>
    <scope>IDENTIFICATION BY MASS SPECTROMETRY</scope>
    <scope>DISRUPTION PHENOTYPE</scope>
    <scope>PHOSPHORYLATION AT SER-565 AND THR-576</scope>
</reference>
<reference key="17">
    <citation type="journal article" date="2004" name="J. Biol. Chem.">
        <title>Structure of the conserved core of the yeast Dot1p, a nucleosomal histone H3 lysine 79 methyltransferase.</title>
        <authorList>
            <person name="Sawada K."/>
            <person name="Yang Z."/>
            <person name="Horton J.R."/>
            <person name="Collins R.E."/>
            <person name="Zhang X."/>
            <person name="Cheng X."/>
        </authorList>
    </citation>
    <scope>X-RAY CRYSTALLOGRAPHY (2.20 ANGSTROMS) OF 158-582 IN COMPLEX WITH S-ADENOSYL-L-HOMOCYSTEINE</scope>
    <scope>CATALYTIC ACTIVITY</scope>
    <scope>ACTIVITY REGULATION</scope>
    <scope>BIOPHYSICOCHEMICAL PROPERTIES</scope>
    <scope>FUNCTION</scope>
    <scope>DNA-BINDING</scope>
    <scope>MUTAGENESIS OF ASP-301; TYR-350; TYR-372; GLU-374; GLU-422; TRP-543 AND TYR-550</scope>
</reference>
<sequence>MGGQESISNNNSDSFIMSSPNLDSQESSISPIDEKKGTDMQTKSLSSYSKGTLLSKQVQNLLEEANKYDPIYGSSLPRGFLRDRNTKGKDNGLVPLVEKVIPPIHKKTNNRNTRKKSSTTTKKDVKKPKAAKVKGKNGRTNHKHTPISKQEIDTAREKKPLKKGRANKKNDRDSPSSTFVDWNGPCLRLQYPLFDIEYLRSHEIYSGTPIQSISLRTNSPQPTSLTSDNDTSSVTTAKLQSILFSNYMEEYKVDFKRSTAIYNPMSEIGKLIEYSCLVFLPSPYAEQLKETILPDLNASFDNSDTKGFVNAINLYNKMIREIPRQRIIDHLETIDKIPRSFIHDFLHIVYTRSIHPQANKLKHYKAFSNYVYGELLPNFLSDVYQQCQLKKGDTFMDLGSGVGNCVVQAALECGCALSFGCEIMDDASDLTILQYEELKKRCKLYGMRLNNVEFSLKKSFVDNNRVAELIPQCDVILVNNFLFDEDLNKKVEKILQTAKVGCKIISLKSLRSLTYQINFYNVENIFNRLKVQRYDLKEDSVSWTHSGGEYYISTVMEDVDESLFSPAARGRRNRGTPVKYTR</sequence>
<keyword id="KW-0002">3D-structure</keyword>
<keyword id="KW-0156">Chromatin regulator</keyword>
<keyword id="KW-0238">DNA-binding</keyword>
<keyword id="KW-0489">Methyltransferase</keyword>
<keyword id="KW-0539">Nucleus</keyword>
<keyword id="KW-0597">Phosphoprotein</keyword>
<keyword id="KW-1185">Reference proteome</keyword>
<keyword id="KW-0677">Repeat</keyword>
<keyword id="KW-0949">S-adenosyl-L-methionine</keyword>
<keyword id="KW-0804">Transcription</keyword>
<keyword id="KW-0805">Transcription regulation</keyword>
<keyword id="KW-0808">Transferase</keyword>